<accession>O93637</accession>
<dbReference type="EMBL" id="AF022779">
    <property type="protein sequence ID" value="AAC79197.1"/>
    <property type="molecule type" value="Genomic_DNA"/>
</dbReference>
<dbReference type="PIR" id="T44066">
    <property type="entry name" value="T44066"/>
</dbReference>
<dbReference type="RefSeq" id="WP_048195088.1">
    <property type="nucleotide sequence ID" value="NZ_CAAGSM010000001.1"/>
</dbReference>
<dbReference type="SMR" id="O93637"/>
<dbReference type="OrthoDB" id="6290at2157"/>
<dbReference type="GO" id="GO:0005829">
    <property type="term" value="C:cytosol"/>
    <property type="evidence" value="ECO:0007669"/>
    <property type="project" value="TreeGrafter"/>
</dbReference>
<dbReference type="GO" id="GO:1990904">
    <property type="term" value="C:ribonucleoprotein complex"/>
    <property type="evidence" value="ECO:0007669"/>
    <property type="project" value="TreeGrafter"/>
</dbReference>
<dbReference type="GO" id="GO:0005525">
    <property type="term" value="F:GTP binding"/>
    <property type="evidence" value="ECO:0007669"/>
    <property type="project" value="UniProtKB-UniRule"/>
</dbReference>
<dbReference type="GO" id="GO:0003924">
    <property type="term" value="F:GTPase activity"/>
    <property type="evidence" value="ECO:0007669"/>
    <property type="project" value="InterPro"/>
</dbReference>
<dbReference type="GO" id="GO:0003746">
    <property type="term" value="F:translation elongation factor activity"/>
    <property type="evidence" value="ECO:0007669"/>
    <property type="project" value="UniProtKB-UniRule"/>
</dbReference>
<dbReference type="CDD" id="cd01681">
    <property type="entry name" value="aeEF2_snRNP_like_IV"/>
    <property type="match status" value="1"/>
</dbReference>
<dbReference type="CDD" id="cd01885">
    <property type="entry name" value="EF2"/>
    <property type="match status" value="1"/>
</dbReference>
<dbReference type="CDD" id="cd16268">
    <property type="entry name" value="EF2_II"/>
    <property type="match status" value="1"/>
</dbReference>
<dbReference type="CDD" id="cd16261">
    <property type="entry name" value="EF2_snRNP_III"/>
    <property type="match status" value="1"/>
</dbReference>
<dbReference type="CDD" id="cd01514">
    <property type="entry name" value="Elongation_Factor_C"/>
    <property type="match status" value="1"/>
</dbReference>
<dbReference type="FunFam" id="2.40.30.10:FF:000110">
    <property type="entry name" value="Elongation factor 2"/>
    <property type="match status" value="1"/>
</dbReference>
<dbReference type="FunFam" id="3.30.70.240:FF:000010">
    <property type="entry name" value="Elongation factor 2"/>
    <property type="match status" value="1"/>
</dbReference>
<dbReference type="FunFam" id="3.40.50.300:FF:000684">
    <property type="entry name" value="Elongation factor 2"/>
    <property type="match status" value="1"/>
</dbReference>
<dbReference type="FunFam" id="3.30.70.870:FF:000002">
    <property type="entry name" value="Translation elongation factor 2"/>
    <property type="match status" value="1"/>
</dbReference>
<dbReference type="Gene3D" id="3.30.230.10">
    <property type="match status" value="1"/>
</dbReference>
<dbReference type="Gene3D" id="3.30.70.240">
    <property type="match status" value="1"/>
</dbReference>
<dbReference type="Gene3D" id="3.30.70.870">
    <property type="entry name" value="Elongation Factor G (Translational Gtpase), domain 3"/>
    <property type="match status" value="1"/>
</dbReference>
<dbReference type="Gene3D" id="3.40.50.300">
    <property type="entry name" value="P-loop containing nucleotide triphosphate hydrolases"/>
    <property type="match status" value="1"/>
</dbReference>
<dbReference type="Gene3D" id="2.40.30.10">
    <property type="entry name" value="Translation factors"/>
    <property type="match status" value="1"/>
</dbReference>
<dbReference type="HAMAP" id="MF_00054_A">
    <property type="entry name" value="EF_G_EF_2_A"/>
    <property type="match status" value="1"/>
</dbReference>
<dbReference type="InterPro" id="IPR041095">
    <property type="entry name" value="EFG_II"/>
</dbReference>
<dbReference type="InterPro" id="IPR035647">
    <property type="entry name" value="EFG_III/V"/>
</dbReference>
<dbReference type="InterPro" id="IPR000640">
    <property type="entry name" value="EFG_V-like"/>
</dbReference>
<dbReference type="InterPro" id="IPR004161">
    <property type="entry name" value="EFTu-like_2"/>
</dbReference>
<dbReference type="InterPro" id="IPR031157">
    <property type="entry name" value="G_TR_CS"/>
</dbReference>
<dbReference type="InterPro" id="IPR027417">
    <property type="entry name" value="P-loop_NTPase"/>
</dbReference>
<dbReference type="InterPro" id="IPR020568">
    <property type="entry name" value="Ribosomal_Su5_D2-typ_SF"/>
</dbReference>
<dbReference type="InterPro" id="IPR014721">
    <property type="entry name" value="Ribsml_uS5_D2-typ_fold_subgr"/>
</dbReference>
<dbReference type="InterPro" id="IPR005225">
    <property type="entry name" value="Small_GTP-bd"/>
</dbReference>
<dbReference type="InterPro" id="IPR000795">
    <property type="entry name" value="T_Tr_GTP-bd_dom"/>
</dbReference>
<dbReference type="InterPro" id="IPR009000">
    <property type="entry name" value="Transl_B-barrel_sf"/>
</dbReference>
<dbReference type="InterPro" id="IPR004543">
    <property type="entry name" value="Transl_elong_EFG/EF2_arc"/>
</dbReference>
<dbReference type="InterPro" id="IPR005517">
    <property type="entry name" value="Transl_elong_EFG/EF2_IV"/>
</dbReference>
<dbReference type="NCBIfam" id="TIGR00490">
    <property type="entry name" value="aEF-2"/>
    <property type="match status" value="1"/>
</dbReference>
<dbReference type="NCBIfam" id="TIGR00231">
    <property type="entry name" value="small_GTP"/>
    <property type="match status" value="1"/>
</dbReference>
<dbReference type="PANTHER" id="PTHR42908:SF3">
    <property type="entry name" value="ELONGATION FACTOR-LIKE GTPASE 1"/>
    <property type="match status" value="1"/>
</dbReference>
<dbReference type="PANTHER" id="PTHR42908">
    <property type="entry name" value="TRANSLATION ELONGATION FACTOR-RELATED"/>
    <property type="match status" value="1"/>
</dbReference>
<dbReference type="Pfam" id="PF00679">
    <property type="entry name" value="EFG_C"/>
    <property type="match status" value="1"/>
</dbReference>
<dbReference type="Pfam" id="PF14492">
    <property type="entry name" value="EFG_III"/>
    <property type="match status" value="1"/>
</dbReference>
<dbReference type="Pfam" id="PF03764">
    <property type="entry name" value="EFG_IV"/>
    <property type="match status" value="1"/>
</dbReference>
<dbReference type="Pfam" id="PF00009">
    <property type="entry name" value="GTP_EFTU"/>
    <property type="match status" value="1"/>
</dbReference>
<dbReference type="Pfam" id="PF03144">
    <property type="entry name" value="GTP_EFTU_D2"/>
    <property type="match status" value="1"/>
</dbReference>
<dbReference type="PRINTS" id="PR00315">
    <property type="entry name" value="ELONGATNFCT"/>
</dbReference>
<dbReference type="SMART" id="SM00838">
    <property type="entry name" value="EFG_C"/>
    <property type="match status" value="1"/>
</dbReference>
<dbReference type="SMART" id="SM00889">
    <property type="entry name" value="EFG_IV"/>
    <property type="match status" value="1"/>
</dbReference>
<dbReference type="SUPFAM" id="SSF54980">
    <property type="entry name" value="EF-G C-terminal domain-like"/>
    <property type="match status" value="2"/>
</dbReference>
<dbReference type="SUPFAM" id="SSF52540">
    <property type="entry name" value="P-loop containing nucleoside triphosphate hydrolases"/>
    <property type="match status" value="1"/>
</dbReference>
<dbReference type="SUPFAM" id="SSF54211">
    <property type="entry name" value="Ribosomal protein S5 domain 2-like"/>
    <property type="match status" value="1"/>
</dbReference>
<dbReference type="SUPFAM" id="SSF50447">
    <property type="entry name" value="Translation proteins"/>
    <property type="match status" value="1"/>
</dbReference>
<dbReference type="PROSITE" id="PS00301">
    <property type="entry name" value="G_TR_1"/>
    <property type="match status" value="1"/>
</dbReference>
<dbReference type="PROSITE" id="PS51722">
    <property type="entry name" value="G_TR_2"/>
    <property type="match status" value="1"/>
</dbReference>
<sequence length="730" mass="80538">MGRRKKMVERVTALMSNPVMIRNIAIIAHIDHGKTTLSDNLLAGAGMISKDLAGRQLFMDSDEEEQERGITIDSANVSMVHEFEDEEYLINLIDTPGHVDFGGDVTRAMRAVDGAVVVIDAVEGTMPQTETVLRQALKEHVRPVLFINKVDRLINELQVDAQEMQIRLGKLIDHVNKLIKGMNEERYNQGWRVDAAEGTVAFGSALYNWAISVPMMQKTGVSFGEVFDYCRAEDMKSLGEKCPLHEAVNDMVIRFLPSPIDAQEDRVGVIWHGDLEAGIGKQMAVADATGDLAFMVTDISMDPHAGEVSTGRLFSGSLSRGMEVYVSGAAKPNRIQQVGVFMGPERLEVDKIPAGNIAAVTGLRDAIVGSTVTTLDGMSPFESIRHASEPVVTVAVEAKHMKDLPKLVEVLRQVAKEDPTLKITLDEETGEHLMAGMGELHLEVIAHRIERDKGVEISTTPPIVVYRETITGTAGPVEGKSPNRHNRFYVVVEPLEPEVRELIREGEISMRMPELERREKLIAAGLDKDEAKRIADIFESNAYFDMTKGIQHLNETMELVLEGFVEVMKAGPLSKEPCMGVKVKLMDAKLHEDAVHRGPAQVIPASRQAIQAAMLMADDTLFEPYQKVFIQTPQEQMGGATKEIQGRRGIIIDMTSEGDTTIIESKAPVSELFGFAGDIRSATEGRAMWSTEFVGFEPLPTNMITEVVSGIRERKGLKKDLPQAQDFMSM</sequence>
<organism>
    <name type="scientific">Methanococcoides methylutens</name>
    <dbReference type="NCBI Taxonomy" id="2226"/>
    <lineage>
        <taxon>Archaea</taxon>
        <taxon>Methanobacteriati</taxon>
        <taxon>Methanobacteriota</taxon>
        <taxon>Stenosarchaea group</taxon>
        <taxon>Methanomicrobia</taxon>
        <taxon>Methanosarcinales</taxon>
        <taxon>Methanosarcinaceae</taxon>
        <taxon>Methanococcoides</taxon>
    </lineage>
</organism>
<comment type="function">
    <text evidence="1">Catalyzes the GTP-dependent ribosomal translocation step during translation elongation. During this step, the ribosome changes from the pre-translocational (PRE) to the post-translocational (POST) state as the newly formed A-site-bound peptidyl-tRNA and P-site-bound deacylated tRNA move to the P and E sites, respectively. Catalyzes the coordinated movement of the two tRNA molecules, the mRNA and conformational changes in the ribosome (By similarity).</text>
</comment>
<comment type="subcellular location">
    <subcellularLocation>
        <location evidence="1">Cytoplasm</location>
    </subcellularLocation>
</comment>
<comment type="similarity">
    <text evidence="2">Belongs to the TRAFAC class translation factor GTPase superfamily. Classic translation factor GTPase family. EF-G/EF-2 subfamily.</text>
</comment>
<reference key="1">
    <citation type="journal article" date="1998" name="FEBS Lett.">
        <title>Archaeal cold-adapted proteins: structural and evolutionary analysis of the elongation factor 2 proteins from psychrophilic, mesophilic and thermophilic methanogens.</title>
        <authorList>
            <person name="Thomas T."/>
            <person name="Cavicchioli R."/>
        </authorList>
    </citation>
    <scope>NUCLEOTIDE SEQUENCE [GENOMIC DNA]</scope>
    <source>
        <strain>ATCC 33938 / DSM 2657 / BCRC 16168 / OCM 158 / TMA-10</strain>
    </source>
</reference>
<name>EF2_METMT</name>
<proteinExistence type="inferred from homology"/>
<gene>
    <name type="primary">fusA</name>
    <name type="synonym">ef-2</name>
    <name type="synonym">fus</name>
</gene>
<evidence type="ECO:0000250" key="1"/>
<evidence type="ECO:0000305" key="2"/>
<feature type="chain" id="PRO_0000091035" description="Elongation factor 2">
    <location>
        <begin position="1"/>
        <end position="730"/>
    </location>
</feature>
<feature type="domain" description="tr-type G">
    <location>
        <begin position="19"/>
        <end position="260"/>
    </location>
</feature>
<feature type="binding site" evidence="1">
    <location>
        <begin position="28"/>
        <end position="35"/>
    </location>
    <ligand>
        <name>GTP</name>
        <dbReference type="ChEBI" id="CHEBI:37565"/>
    </ligand>
</feature>
<feature type="binding site" evidence="1">
    <location>
        <begin position="94"/>
        <end position="98"/>
    </location>
    <ligand>
        <name>GTP</name>
        <dbReference type="ChEBI" id="CHEBI:37565"/>
    </ligand>
</feature>
<feature type="binding site" evidence="1">
    <location>
        <begin position="148"/>
        <end position="151"/>
    </location>
    <ligand>
        <name>GTP</name>
        <dbReference type="ChEBI" id="CHEBI:37565"/>
    </ligand>
</feature>
<feature type="modified residue" description="Diphthamide" evidence="1">
    <location>
        <position position="596"/>
    </location>
</feature>
<protein>
    <recommendedName>
        <fullName>Elongation factor 2</fullName>
        <shortName>EF-2</shortName>
    </recommendedName>
</protein>
<keyword id="KW-0963">Cytoplasm</keyword>
<keyword id="KW-0251">Elongation factor</keyword>
<keyword id="KW-0342">GTP-binding</keyword>
<keyword id="KW-0547">Nucleotide-binding</keyword>
<keyword id="KW-0648">Protein biosynthesis</keyword>